<name>ATPD_NOCSJ</name>
<reference key="1">
    <citation type="submission" date="2006-12" db="EMBL/GenBank/DDBJ databases">
        <title>Complete sequence of chromosome 1 of Nocardioides sp. JS614.</title>
        <authorList>
            <person name="Copeland A."/>
            <person name="Lucas S."/>
            <person name="Lapidus A."/>
            <person name="Barry K."/>
            <person name="Detter J.C."/>
            <person name="Glavina del Rio T."/>
            <person name="Hammon N."/>
            <person name="Israni S."/>
            <person name="Dalin E."/>
            <person name="Tice H."/>
            <person name="Pitluck S."/>
            <person name="Thompson L.S."/>
            <person name="Brettin T."/>
            <person name="Bruce D."/>
            <person name="Han C."/>
            <person name="Tapia R."/>
            <person name="Schmutz J."/>
            <person name="Larimer F."/>
            <person name="Land M."/>
            <person name="Hauser L."/>
            <person name="Kyrpides N."/>
            <person name="Kim E."/>
            <person name="Mattes T."/>
            <person name="Gossett J."/>
            <person name="Richardson P."/>
        </authorList>
    </citation>
    <scope>NUCLEOTIDE SEQUENCE [LARGE SCALE GENOMIC DNA]</scope>
    <source>
        <strain>ATCC BAA-499 / JS614</strain>
    </source>
</reference>
<proteinExistence type="inferred from homology"/>
<organism>
    <name type="scientific">Nocardioides sp. (strain ATCC BAA-499 / JS614)</name>
    <dbReference type="NCBI Taxonomy" id="196162"/>
    <lineage>
        <taxon>Bacteria</taxon>
        <taxon>Bacillati</taxon>
        <taxon>Actinomycetota</taxon>
        <taxon>Actinomycetes</taxon>
        <taxon>Propionibacteriales</taxon>
        <taxon>Nocardioidaceae</taxon>
        <taxon>Nocardioides</taxon>
    </lineage>
</organism>
<keyword id="KW-0066">ATP synthesis</keyword>
<keyword id="KW-1003">Cell membrane</keyword>
<keyword id="KW-0139">CF(1)</keyword>
<keyword id="KW-0375">Hydrogen ion transport</keyword>
<keyword id="KW-0406">Ion transport</keyword>
<keyword id="KW-0472">Membrane</keyword>
<keyword id="KW-1185">Reference proteome</keyword>
<keyword id="KW-0813">Transport</keyword>
<dbReference type="EMBL" id="CP000509">
    <property type="protein sequence ID" value="ABL81273.1"/>
    <property type="molecule type" value="Genomic_DNA"/>
</dbReference>
<dbReference type="RefSeq" id="WP_011755220.1">
    <property type="nucleotide sequence ID" value="NC_008699.1"/>
</dbReference>
<dbReference type="SMR" id="A1SHI8"/>
<dbReference type="STRING" id="196162.Noca_1760"/>
<dbReference type="KEGG" id="nca:Noca_1760"/>
<dbReference type="eggNOG" id="COG0712">
    <property type="taxonomic scope" value="Bacteria"/>
</dbReference>
<dbReference type="HOGENOM" id="CLU_088880_0_0_11"/>
<dbReference type="OrthoDB" id="5242917at2"/>
<dbReference type="Proteomes" id="UP000000640">
    <property type="component" value="Chromosome"/>
</dbReference>
<dbReference type="GO" id="GO:0005886">
    <property type="term" value="C:plasma membrane"/>
    <property type="evidence" value="ECO:0007669"/>
    <property type="project" value="UniProtKB-SubCell"/>
</dbReference>
<dbReference type="GO" id="GO:0045259">
    <property type="term" value="C:proton-transporting ATP synthase complex"/>
    <property type="evidence" value="ECO:0007669"/>
    <property type="project" value="UniProtKB-KW"/>
</dbReference>
<dbReference type="GO" id="GO:0046933">
    <property type="term" value="F:proton-transporting ATP synthase activity, rotational mechanism"/>
    <property type="evidence" value="ECO:0007669"/>
    <property type="project" value="UniProtKB-UniRule"/>
</dbReference>
<dbReference type="HAMAP" id="MF_01416">
    <property type="entry name" value="ATP_synth_delta_bact"/>
    <property type="match status" value="1"/>
</dbReference>
<dbReference type="InterPro" id="IPR020781">
    <property type="entry name" value="ATPase_OSCP/d_CS"/>
</dbReference>
<dbReference type="InterPro" id="IPR000711">
    <property type="entry name" value="ATPase_OSCP/dsu"/>
</dbReference>
<dbReference type="NCBIfam" id="TIGR01145">
    <property type="entry name" value="ATP_synt_delta"/>
    <property type="match status" value="1"/>
</dbReference>
<dbReference type="NCBIfam" id="NF009967">
    <property type="entry name" value="PRK13430.1"/>
    <property type="match status" value="1"/>
</dbReference>
<dbReference type="PANTHER" id="PTHR11910">
    <property type="entry name" value="ATP SYNTHASE DELTA CHAIN"/>
    <property type="match status" value="1"/>
</dbReference>
<dbReference type="Pfam" id="PF00213">
    <property type="entry name" value="OSCP"/>
    <property type="match status" value="1"/>
</dbReference>
<dbReference type="PRINTS" id="PR00125">
    <property type="entry name" value="ATPASEDELTA"/>
</dbReference>
<dbReference type="PROSITE" id="PS00389">
    <property type="entry name" value="ATPASE_DELTA"/>
    <property type="match status" value="1"/>
</dbReference>
<comment type="function">
    <text evidence="1">F(1)F(0) ATP synthase produces ATP from ADP in the presence of a proton or sodium gradient. F-type ATPases consist of two structural domains, F(1) containing the extramembraneous catalytic core and F(0) containing the membrane proton channel, linked together by a central stalk and a peripheral stalk. During catalysis, ATP synthesis in the catalytic domain of F(1) is coupled via a rotary mechanism of the central stalk subunits to proton translocation.</text>
</comment>
<comment type="function">
    <text evidence="1">This protein is part of the stalk that links CF(0) to CF(1). It either transmits conformational changes from CF(0) to CF(1) or is implicated in proton conduction.</text>
</comment>
<comment type="subunit">
    <text evidence="1">F-type ATPases have 2 components, F(1) - the catalytic core - and F(0) - the membrane proton channel. F(1) has five subunits: alpha(3), beta(3), gamma(1), delta(1), epsilon(1). F(0) has three main subunits: a(1), b(2) and c(10-14). The alpha and beta chains form an alternating ring which encloses part of the gamma chain. F(1) is attached to F(0) by a central stalk formed by the gamma and epsilon chains, while a peripheral stalk is formed by the delta and b chains.</text>
</comment>
<comment type="subcellular location">
    <subcellularLocation>
        <location evidence="1">Cell membrane</location>
        <topology evidence="1">Peripheral membrane protein</topology>
    </subcellularLocation>
</comment>
<comment type="similarity">
    <text evidence="1">Belongs to the ATPase delta chain family.</text>
</comment>
<protein>
    <recommendedName>
        <fullName evidence="1">ATP synthase subunit delta</fullName>
    </recommendedName>
    <alternativeName>
        <fullName evidence="1">ATP synthase F(1) sector subunit delta</fullName>
    </alternativeName>
    <alternativeName>
        <fullName evidence="1">F-type ATPase subunit delta</fullName>
        <shortName evidence="1">F-ATPase subunit delta</shortName>
    </alternativeName>
</protein>
<gene>
    <name evidence="1" type="primary">atpH</name>
    <name type="ordered locus">Noca_1760</name>
</gene>
<feature type="chain" id="PRO_0000382131" description="ATP synthase subunit delta">
    <location>
        <begin position="1"/>
        <end position="275"/>
    </location>
</feature>
<sequence>MVQQLSSLRGSSAEALQVLGEQVDGDRYTLEEFAALADDLFRAAALLRSEPALRRAVTDVSTPAEAKSSLVHGLLDGKLGAPAVDLLAQAVGLRWVAARDLADAVEHLGVVAAVRSAGRRESVRLSDELFVVAQVVEENAELRIALSDPVRSTDDKRELLRGLLAQRALPATVALVEQALAGSFRSFHAAVSEYQKVAAATQGEGVALVRVARELTEAERTRLEQALSTQYGRPVHLNIEVDPSLLGGMRVEIGDDVIDGTVVSRLDDARRRLAG</sequence>
<accession>A1SHI8</accession>
<evidence type="ECO:0000255" key="1">
    <source>
        <dbReference type="HAMAP-Rule" id="MF_01416"/>
    </source>
</evidence>